<organism>
    <name type="scientific">Homo sapiens</name>
    <name type="common">Human</name>
    <dbReference type="NCBI Taxonomy" id="9606"/>
    <lineage>
        <taxon>Eukaryota</taxon>
        <taxon>Metazoa</taxon>
        <taxon>Chordata</taxon>
        <taxon>Craniata</taxon>
        <taxon>Vertebrata</taxon>
        <taxon>Euteleostomi</taxon>
        <taxon>Mammalia</taxon>
        <taxon>Eutheria</taxon>
        <taxon>Euarchontoglires</taxon>
        <taxon>Primates</taxon>
        <taxon>Haplorrhini</taxon>
        <taxon>Catarrhini</taxon>
        <taxon>Hominidae</taxon>
        <taxon>Homo</taxon>
    </lineage>
</organism>
<gene>
    <name type="primary">CHP1</name>
    <name type="synonym">CHP</name>
</gene>
<protein>
    <recommendedName>
        <fullName>Calcineurin B homologous protein 1</fullName>
    </recommendedName>
    <alternativeName>
        <fullName>Calcineurin B-like protein</fullName>
    </alternativeName>
    <alternativeName>
        <fullName>Calcium-binding protein CHP</fullName>
    </alternativeName>
    <alternativeName>
        <fullName>Calcium-binding protein p22</fullName>
    </alternativeName>
    <alternativeName>
        <fullName>EF-hand calcium-binding domain-containing protein p22</fullName>
    </alternativeName>
</protein>
<feature type="initiator methionine" description="Removed" evidence="10">
    <location>
        <position position="1"/>
    </location>
</feature>
<feature type="chain" id="PRO_0000073843" description="Calcineurin B homologous protein 1">
    <location>
        <begin position="2"/>
        <end position="195"/>
    </location>
</feature>
<feature type="domain" description="EF-hand 1" evidence="4">
    <location>
        <begin position="26"/>
        <end position="61"/>
    </location>
</feature>
<feature type="domain" description="EF-hand 2" evidence="15">
    <location>
        <begin position="66"/>
        <end position="101"/>
    </location>
</feature>
<feature type="domain" description="EF-hand 3" evidence="4">
    <location>
        <begin position="110"/>
        <end position="145"/>
    </location>
</feature>
<feature type="domain" description="EF-hand 4" evidence="4">
    <location>
        <begin position="151"/>
        <end position="186"/>
    </location>
</feature>
<feature type="region of interest" description="Necessary for nuclear export signal">
    <location>
        <begin position="143"/>
        <end position="185"/>
    </location>
</feature>
<feature type="short sequence motif" description="Necessary for association with microtubule and interaction with GAPDH" evidence="1">
    <location>
        <begin position="2"/>
        <end position="6"/>
    </location>
</feature>
<feature type="short sequence motif" description="Nuclear export signal 1" evidence="1">
    <location>
        <begin position="138"/>
        <end position="147"/>
    </location>
</feature>
<feature type="short sequence motif" description="Nuclear export signal 2" evidence="1">
    <location>
        <begin position="176"/>
        <end position="185"/>
    </location>
</feature>
<feature type="binding site" evidence="15">
    <location>
        <position position="123"/>
    </location>
    <ligand>
        <name>Ca(2+)</name>
        <dbReference type="ChEBI" id="CHEBI:29108"/>
        <label>1</label>
    </ligand>
</feature>
<feature type="binding site" evidence="15">
    <location>
        <position position="125"/>
    </location>
    <ligand>
        <name>Ca(2+)</name>
        <dbReference type="ChEBI" id="CHEBI:29108"/>
        <label>1</label>
    </ligand>
</feature>
<feature type="binding site" evidence="15">
    <location>
        <position position="127"/>
    </location>
    <ligand>
        <name>Ca(2+)</name>
        <dbReference type="ChEBI" id="CHEBI:29108"/>
        <label>1</label>
    </ligand>
</feature>
<feature type="binding site" evidence="15">
    <location>
        <position position="129"/>
    </location>
    <ligand>
        <name>Ca(2+)</name>
        <dbReference type="ChEBI" id="CHEBI:29108"/>
        <label>1</label>
    </ligand>
</feature>
<feature type="binding site" evidence="15">
    <location>
        <position position="134"/>
    </location>
    <ligand>
        <name>Ca(2+)</name>
        <dbReference type="ChEBI" id="CHEBI:29108"/>
        <label>1</label>
    </ligand>
</feature>
<feature type="binding site" evidence="15">
    <location>
        <position position="164"/>
    </location>
    <ligand>
        <name>Ca(2+)</name>
        <dbReference type="ChEBI" id="CHEBI:29108"/>
        <label>2</label>
    </ligand>
</feature>
<feature type="binding site" evidence="15">
    <location>
        <position position="166"/>
    </location>
    <ligand>
        <name>Ca(2+)</name>
        <dbReference type="ChEBI" id="CHEBI:29108"/>
        <label>2</label>
    </ligand>
</feature>
<feature type="binding site" evidence="15">
    <location>
        <position position="168"/>
    </location>
    <ligand>
        <name>Ca(2+)</name>
        <dbReference type="ChEBI" id="CHEBI:29108"/>
        <label>2</label>
    </ligand>
</feature>
<feature type="binding site" evidence="15">
    <location>
        <position position="175"/>
    </location>
    <ligand>
        <name>Ca(2+)</name>
        <dbReference type="ChEBI" id="CHEBI:29108"/>
        <label>2</label>
    </ligand>
</feature>
<feature type="lipid moiety-binding region" description="N-myristoyl glycine" evidence="10">
    <location>
        <position position="2"/>
    </location>
</feature>
<feature type="sequence variant" id="VAR_083033" description="In SPAX9; decreased protein solubility; decreased protein location at the plasma membrane; dbSNP:rs1310569366." evidence="11">
    <location>
        <position position="19"/>
    </location>
</feature>
<feature type="mutagenesis site" description="Does not reduce calcium-binding, colocalization and interaction with SLC9A1." evidence="7">
    <original>D</original>
    <variation>A</variation>
    <location>
        <position position="50"/>
    </location>
</feature>
<feature type="mutagenesis site" description="Reduces calcium-binding and SLC9A1-dependent Na(+)/H(+) exchange activity. Does not reduce colocalization and interaction with SLC9A1. Reduces colocalization and interaction with SLC9A1; when associated with A-175." evidence="7">
    <original>E</original>
    <variation>A</variation>
    <location>
        <position position="134"/>
    </location>
</feature>
<feature type="mutagenesis site" description="Inhibits translocation to the cytoplasm; when associated with A-145; A-147; A-183 and A-185." evidence="9">
    <original>V</original>
    <variation>A</variation>
    <location>
        <position position="143"/>
    </location>
</feature>
<feature type="mutagenesis site" description="Inhibits translocation to the cytoplasm; when associated with A-143; A-147; A-183 and A-185." evidence="9">
    <original>V</original>
    <variation>A</variation>
    <location>
        <position position="145"/>
    </location>
</feature>
<feature type="mutagenesis site" description="Inhibits translocation to the cytoplasm; when associated with A-143; A-145; A-183 and A-185." evidence="9">
    <original>I</original>
    <variation>A</variation>
    <location>
        <position position="147"/>
    </location>
</feature>
<feature type="mutagenesis site" description="Reduces calcium-binding and SLC9A1-dependent Na(+)/H(+) exchange activity. Does not reduce colocalization and interaction with SLC9A1. Reduces colocalization and interaction with SLC9A1; when associated with A-134." evidence="7">
    <original>E</original>
    <variation>A</variation>
    <location>
        <position position="175"/>
    </location>
</feature>
<feature type="mutagenesis site" description="Inhibits translocation to the cytoplasm; when associated with A-143; A-145; A-147 and A-185." evidence="9">
    <original>V</original>
    <variation>A</variation>
    <location>
        <position position="183"/>
    </location>
</feature>
<feature type="mutagenesis site" description="Inhibits translocation to the cytoplasm; when associated with A-143; A-145; A-147 and A-183." evidence="9">
    <original>V</original>
    <variation>A</variation>
    <location>
        <position position="185"/>
    </location>
</feature>
<feature type="mutagenesis site" description="Does not affect sodium:proton antiporter activity." evidence="12">
    <original>R</original>
    <variation>A</variation>
    <location>
        <position position="192"/>
    </location>
</feature>
<feature type="helix" evidence="20">
    <location>
        <begin position="13"/>
        <end position="21"/>
    </location>
</feature>
<feature type="helix" evidence="20">
    <location>
        <begin position="25"/>
        <end position="38"/>
    </location>
</feature>
<feature type="strand" evidence="20">
    <location>
        <begin position="44"/>
        <end position="46"/>
    </location>
</feature>
<feature type="helix" evidence="20">
    <location>
        <begin position="48"/>
        <end position="52"/>
    </location>
</feature>
<feature type="turn" evidence="20">
    <location>
        <begin position="55"/>
        <end position="57"/>
    </location>
</feature>
<feature type="strand" evidence="20">
    <location>
        <begin position="58"/>
        <end position="60"/>
    </location>
</feature>
<feature type="helix" evidence="20">
    <location>
        <begin position="63"/>
        <end position="70"/>
    </location>
</feature>
<feature type="strand" evidence="19">
    <location>
        <begin position="72"/>
        <end position="74"/>
    </location>
</feature>
<feature type="helix" evidence="20">
    <location>
        <begin position="80"/>
        <end position="87"/>
    </location>
</feature>
<feature type="helix" evidence="20">
    <location>
        <begin position="88"/>
        <end position="90"/>
    </location>
</feature>
<feature type="helix" evidence="20">
    <location>
        <begin position="95"/>
        <end position="98"/>
    </location>
</feature>
<feature type="strand" evidence="19">
    <location>
        <begin position="108"/>
        <end position="110"/>
    </location>
</feature>
<feature type="helix" evidence="20">
    <location>
        <begin position="111"/>
        <end position="122"/>
    </location>
</feature>
<feature type="strand" evidence="19">
    <location>
        <begin position="123"/>
        <end position="125"/>
    </location>
</feature>
<feature type="strand" evidence="20">
    <location>
        <begin position="128"/>
        <end position="130"/>
    </location>
</feature>
<feature type="helix" evidence="20">
    <location>
        <begin position="132"/>
        <end position="141"/>
    </location>
</feature>
<feature type="strand" evidence="19">
    <location>
        <begin position="145"/>
        <end position="147"/>
    </location>
</feature>
<feature type="helix" evidence="20">
    <location>
        <begin position="149"/>
        <end position="163"/>
    </location>
</feature>
<feature type="strand" evidence="20">
    <location>
        <begin position="166"/>
        <end position="172"/>
    </location>
</feature>
<feature type="helix" evidence="20">
    <location>
        <begin position="173"/>
        <end position="179"/>
    </location>
</feature>
<feature type="helix" evidence="20">
    <location>
        <begin position="180"/>
        <end position="182"/>
    </location>
</feature>
<feature type="helix" evidence="20">
    <location>
        <begin position="185"/>
        <end position="188"/>
    </location>
</feature>
<evidence type="ECO:0000250" key="1"/>
<evidence type="ECO:0000250" key="2">
    <source>
        <dbReference type="UniProtKB" id="P61022"/>
    </source>
</evidence>
<evidence type="ECO:0000250" key="3">
    <source>
        <dbReference type="UniProtKB" id="P61023"/>
    </source>
</evidence>
<evidence type="ECO:0000255" key="4">
    <source>
        <dbReference type="PROSITE-ProRule" id="PRU00448"/>
    </source>
</evidence>
<evidence type="ECO:0000269" key="5">
    <source>
    </source>
</evidence>
<evidence type="ECO:0000269" key="6">
    <source>
    </source>
</evidence>
<evidence type="ECO:0000269" key="7">
    <source>
    </source>
</evidence>
<evidence type="ECO:0000269" key="8">
    <source>
    </source>
</evidence>
<evidence type="ECO:0000269" key="9">
    <source>
    </source>
</evidence>
<evidence type="ECO:0000269" key="10">
    <source>
    </source>
</evidence>
<evidence type="ECO:0000269" key="11">
    <source>
    </source>
</evidence>
<evidence type="ECO:0000269" key="12">
    <source>
    </source>
</evidence>
<evidence type="ECO:0000269" key="13">
    <source>
    </source>
</evidence>
<evidence type="ECO:0000269" key="14">
    <source>
    </source>
</evidence>
<evidence type="ECO:0000305" key="15"/>
<evidence type="ECO:0007744" key="16">
    <source>
        <dbReference type="PDB" id="7DSV"/>
    </source>
</evidence>
<evidence type="ECO:0007744" key="17">
    <source>
        <dbReference type="PDB" id="7DSX"/>
    </source>
</evidence>
<evidence type="ECO:0007744" key="18">
    <source>
        <dbReference type="PDB" id="7X2U"/>
    </source>
</evidence>
<evidence type="ECO:0007829" key="19">
    <source>
        <dbReference type="PDB" id="7DSV"/>
    </source>
</evidence>
<evidence type="ECO:0007829" key="20">
    <source>
        <dbReference type="PDB" id="7X2U"/>
    </source>
</evidence>
<name>CHP1_HUMAN</name>
<keyword id="KW-0002">3D-structure</keyword>
<keyword id="KW-0106">Calcium</keyword>
<keyword id="KW-1003">Cell membrane</keyword>
<keyword id="KW-0963">Cytoplasm</keyword>
<keyword id="KW-0206">Cytoskeleton</keyword>
<keyword id="KW-0225">Disease variant</keyword>
<keyword id="KW-0256">Endoplasmic reticulum</keyword>
<keyword id="KW-0449">Lipoprotein</keyword>
<keyword id="KW-0472">Membrane</keyword>
<keyword id="KW-0479">Metal-binding</keyword>
<keyword id="KW-0519">Myristate</keyword>
<keyword id="KW-0523">Neurodegeneration</keyword>
<keyword id="KW-0539">Nucleus</keyword>
<keyword id="KW-0597">Phosphoprotein</keyword>
<keyword id="KW-0649">Protein kinase inhibitor</keyword>
<keyword id="KW-0653">Protein transport</keyword>
<keyword id="KW-1267">Proteomics identification</keyword>
<keyword id="KW-1185">Reference proteome</keyword>
<keyword id="KW-0677">Repeat</keyword>
<keyword id="KW-0813">Transport</keyword>
<accession>Q99653</accession>
<accession>B2R6H9</accession>
<accession>Q6FHZ9</accession>
<comment type="function">
    <text evidence="5 6 7 14">Calcium-binding protein involved in different processes such as regulation of vesicular trafficking, plasma membrane Na(+)/H(+) exchanger and gene transcription. Involved in the constitutive exocytic membrane traffic. Mediates the association between microtubules and membrane-bound organelles of the endoplasmic reticulum and Golgi apparatus and is also required for the targeting and fusion of transcytotic vesicles (TCV) with the plasma membrane. Functions as an integral cofactor in cell pH regulation by controlling plasma membrane-type Na(+)/H(+) exchange activity. Affects the pH sensitivity of SLC9A1/NHE1 by increasing its sensitivity at acidic pH. Required for the stabilization and localization of SLC9A1/NHE1 at the plasma membrane. Inhibits serum- and GTPase-stimulated Na(+)/H(+) exchange. Plays a role as an inhibitor of ribosomal RNA transcription by repressing the nucleolar UBF1 transcriptional activity. May sequester UBF1 in the nucleoplasm and limit its translocation to the nucleolus. Associates to the ribosomal gene promoter. Acts as a negative regulator of the calcineurin/NFAT signaling pathway. Inhibits NFAT nuclear translocation and transcriptional activity by suppressing the calcium-dependent calcineurin phosphatase activity. Also negatively regulates the kinase activity of the apoptosis-induced kinase STK17B. Inhibits both STK17B auto- and substrate-phosphorylations in a calcium-dependent manner.</text>
</comment>
<comment type="subunit">
    <text evidence="2 5 6 7 8 12 13 14">Monomer. Interacts with STK17B; the interaction occurs in a calcium-independent manner and induces the translocation of CHP1 from the Golgi to the nucleus. Interacts with GAPDH; the interaction is direct, occurs in a N-myristoylation-dependent manner and facilitates the ability of CHP1 to bind microtubules. Interacts with KIF1B (via the C-terminal end of the kinesin-motor domain); the interaction occurs in a calcium-dependent manner. Associates (via C-terminal domain) with microtubules; the association occurs with polymerized microtubules during the cell cycle in a myristoylation- and calcium-independent manner and is enhanced by GAPDH (By similarity). Interacts with PPP3CA. Interacts with SLC9A1/NHE1 (via the C-terminal domain); the interaction occurs at the plasma membrane in a calcium-dependent manner and at a domain that is critical for growth factor stimulation of the exchanger (PubMed:11350981, PubMed:15035633, PubMed:34108458, PubMed:35613257, PubMed:8901634). Interacts with SLC9A3; increases SLC9A3 trafficking and activity at the plasma membrane (PubMed:35613257).</text>
</comment>
<comment type="interaction">
    <interactant intactId="EBI-722721">
        <id>Q99653</id>
    </interactant>
    <interactant intactId="EBI-743635">
        <id>P19634</id>
        <label>SLC9A1</label>
    </interactant>
    <organismsDiffer>false</organismsDiffer>
    <experiments>3</experiments>
</comment>
<comment type="interaction">
    <interactant intactId="EBI-722721">
        <id>Q99653</id>
    </interactant>
    <interactant intactId="EBI-20625235">
        <id>A0A142I5B9</id>
    </interactant>
    <organismsDiffer>true</organismsDiffer>
    <experiments>2</experiments>
</comment>
<comment type="subcellular location">
    <subcellularLocation>
        <location evidence="3">Nucleus</location>
    </subcellularLocation>
    <subcellularLocation>
        <location evidence="3">Cytoplasm</location>
    </subcellularLocation>
    <subcellularLocation>
        <location evidence="3">Cytoplasm</location>
        <location evidence="3">Cytoskeleton</location>
    </subcellularLocation>
    <subcellularLocation>
        <location evidence="3">Endomembrane system</location>
    </subcellularLocation>
    <subcellularLocation>
        <location evidence="3">Endoplasmic reticulum-Golgi intermediate compartment</location>
    </subcellularLocation>
    <subcellularLocation>
        <location evidence="3">Endoplasmic reticulum</location>
    </subcellularLocation>
    <subcellularLocation>
        <location evidence="7 11">Cell membrane</location>
    </subcellularLocation>
    <subcellularLocation>
        <location evidence="6 11">Membrane</location>
        <topology evidence="10">Lipid-anchor</topology>
    </subcellularLocation>
    <text evidence="3">Localizes in cytoplasmic compartments in dividing cells. Localizes in the nucleus in quiescent cells. Exported from the nucleus to the cytoplasm through a nuclear export signal (NES) and CRM1-dependent pathway. May shuttle between nucleus and cytoplasm. Localizes with the microtubule-organizing center (MTOC) and extends toward the periphery along microtubules. Associates with membranes of the early secretory pathway in a GAPDH-independent, N-myristoylation- and calcium-dependent manner. Colocalizes with the mitotic spindle microtubules. Colocalizes with GAPDH along microtubules. Colocalizes with SLC9A1 at the endoplasmic reticulum and plasma membrane. Colocalizes with STK17B at the plasma membrane.</text>
</comment>
<comment type="tissue specificity">
    <text evidence="14">Ubiquitously expressed. Has been found in fetal eye, lung, liver, muscle, heart, kidney, thymus and spleen.</text>
</comment>
<comment type="PTM">
    <text evidence="14">Phosphorylated; decreased phosphorylation is associated with an increase in SLC9A1/NHE1 Na(+)/H(+) exchange activity. Phosphorylation occurs in serum-dependent manner. The phosphorylation state may regulate the binding to SLC9A1/NHE1.</text>
</comment>
<comment type="PTM">
    <text evidence="1">Both N-myristoylation and calcium-mediated conformational changes are essential for its function in exocytic traffic (By similarity). N-myristoylation is required for its association with microtubules and interaction with GAPDH, but not for the constitutive association to membranes.</text>
</comment>
<comment type="disease" evidence="11">
    <disease id="DI-05572">
        <name>Spastic ataxia 9, autosomal recessive</name>
        <acronym>SPAX9</acronym>
        <description>An autosomal recessive disorder characterized by onset of spastic ataxia in the first years of life. Clinical features include motor neuropathy, cerebellar atrophy, spastic paraparesis, intellectual disability, slow ocular saccades, axial hypotonia, distal muscle weakness and atrophy, and pyramidal symptoms, including hyperreflexia and extensor plantar responses.</description>
        <dbReference type="MIM" id="618438"/>
    </disease>
    <text>The disease is caused by variants affecting the gene represented in this entry.</text>
</comment>
<comment type="similarity">
    <text evidence="15">Belongs to the calcineurin regulatory subunit family. CHP subfamily.</text>
</comment>
<sequence length="195" mass="22456">MGSRASTLLRDEELEEIKKETGFSHSQITRLYSRFTSLDKGENGTLSREDFQRIPELAINPLGDRIINAFFPEGEDQVNFRGFMRTLAHFRPIEDNEKSKDVNGPEPLNSRSNKLHFAFRLYDLDKDEKISRDELLQVLRMMVGVNISDEQLGSIADRTIQEADQDGDSAISFTEFVKVLEKVDVEQKMSIRFLH</sequence>
<dbReference type="EMBL" id="U61538">
    <property type="protein sequence ID" value="AAB37770.1"/>
    <property type="molecule type" value="mRNA"/>
</dbReference>
<dbReference type="EMBL" id="CR536539">
    <property type="protein sequence ID" value="CAG38776.1"/>
    <property type="molecule type" value="mRNA"/>
</dbReference>
<dbReference type="EMBL" id="CR542085">
    <property type="protein sequence ID" value="CAG46882.1"/>
    <property type="molecule type" value="mRNA"/>
</dbReference>
<dbReference type="EMBL" id="AK312582">
    <property type="protein sequence ID" value="BAG35476.1"/>
    <property type="molecule type" value="mRNA"/>
</dbReference>
<dbReference type="EMBL" id="CH471125">
    <property type="protein sequence ID" value="EAW92474.1"/>
    <property type="molecule type" value="Genomic_DNA"/>
</dbReference>
<dbReference type="EMBL" id="BC031293">
    <property type="protein sequence ID" value="AAH31293.1"/>
    <property type="molecule type" value="mRNA"/>
</dbReference>
<dbReference type="EMBL" id="BC051815">
    <property type="status" value="NOT_ANNOTATED_CDS"/>
    <property type="molecule type" value="mRNA"/>
</dbReference>
<dbReference type="CCDS" id="CCDS10073.1"/>
<dbReference type="RefSeq" id="NP_009167.1">
    <property type="nucleotide sequence ID" value="NM_007236.5"/>
</dbReference>
<dbReference type="PDB" id="2E30">
    <property type="method" value="NMR"/>
    <property type="chains" value="A=1-195"/>
</dbReference>
<dbReference type="PDB" id="7DSV">
    <property type="method" value="EM"/>
    <property type="resolution" value="3.40 A"/>
    <property type="chains" value="C/D=11-195"/>
</dbReference>
<dbReference type="PDB" id="7DSX">
    <property type="method" value="EM"/>
    <property type="resolution" value="3.50 A"/>
    <property type="chains" value="C/D=11-195"/>
</dbReference>
<dbReference type="PDB" id="7X2U">
    <property type="method" value="EM"/>
    <property type="resolution" value="3.20 A"/>
    <property type="chains" value="C/D=11-195"/>
</dbReference>
<dbReference type="PDBsum" id="2E30"/>
<dbReference type="PDBsum" id="7DSV"/>
<dbReference type="PDBsum" id="7DSX"/>
<dbReference type="PDBsum" id="7X2U"/>
<dbReference type="EMDB" id="EMD-30847"/>
<dbReference type="EMDB" id="EMD-30849"/>
<dbReference type="EMDB" id="EMD-32971"/>
<dbReference type="SMR" id="Q99653"/>
<dbReference type="BioGRID" id="116421">
    <property type="interactions" value="110"/>
</dbReference>
<dbReference type="CORUM" id="Q99653"/>
<dbReference type="FunCoup" id="Q99653">
    <property type="interactions" value="2279"/>
</dbReference>
<dbReference type="IntAct" id="Q99653">
    <property type="interactions" value="54"/>
</dbReference>
<dbReference type="MINT" id="Q99653"/>
<dbReference type="STRING" id="9606.ENSP00000335632"/>
<dbReference type="DrugBank" id="DB11093">
    <property type="generic name" value="Calcium citrate"/>
</dbReference>
<dbReference type="DrugBank" id="DB11348">
    <property type="generic name" value="Calcium Phosphate"/>
</dbReference>
<dbReference type="DrugBank" id="DB14481">
    <property type="generic name" value="Calcium phosphate dihydrate"/>
</dbReference>
<dbReference type="TCDB" id="8.A.82.1.6">
    <property type="family name" value="the calmodulin calcium binding protein (calmodulin) family"/>
</dbReference>
<dbReference type="GlyGen" id="Q99653">
    <property type="glycosylation" value="1 site, 1 O-linked glycan (1 site)"/>
</dbReference>
<dbReference type="iPTMnet" id="Q99653"/>
<dbReference type="PhosphoSitePlus" id="Q99653"/>
<dbReference type="SwissPalm" id="Q99653"/>
<dbReference type="BioMuta" id="CHP1"/>
<dbReference type="DMDM" id="3023439"/>
<dbReference type="OGP" id="Q99653"/>
<dbReference type="jPOST" id="Q99653"/>
<dbReference type="MassIVE" id="Q99653"/>
<dbReference type="PaxDb" id="9606-ENSP00000335632"/>
<dbReference type="PeptideAtlas" id="Q99653"/>
<dbReference type="ProteomicsDB" id="78381"/>
<dbReference type="Pumba" id="Q99653"/>
<dbReference type="TopDownProteomics" id="Q99653"/>
<dbReference type="Antibodypedia" id="1886">
    <property type="antibodies" value="242 antibodies from 26 providers"/>
</dbReference>
<dbReference type="DNASU" id="11261"/>
<dbReference type="Ensembl" id="ENST00000334660.10">
    <property type="protein sequence ID" value="ENSP00000335632.5"/>
    <property type="gene ID" value="ENSG00000187446.12"/>
</dbReference>
<dbReference type="GeneID" id="11261"/>
<dbReference type="KEGG" id="hsa:11261"/>
<dbReference type="MANE-Select" id="ENST00000334660.10">
    <property type="protein sequence ID" value="ENSP00000335632.5"/>
    <property type="RefSeq nucleotide sequence ID" value="NM_007236.5"/>
    <property type="RefSeq protein sequence ID" value="NP_009167.1"/>
</dbReference>
<dbReference type="UCSC" id="uc001znl.4">
    <property type="organism name" value="human"/>
</dbReference>
<dbReference type="AGR" id="HGNC:17433"/>
<dbReference type="CTD" id="11261"/>
<dbReference type="DisGeNET" id="11261"/>
<dbReference type="GeneCards" id="CHP1"/>
<dbReference type="HGNC" id="HGNC:17433">
    <property type="gene designation" value="CHP1"/>
</dbReference>
<dbReference type="HPA" id="ENSG00000187446">
    <property type="expression patterns" value="Low tissue specificity"/>
</dbReference>
<dbReference type="MalaCards" id="CHP1"/>
<dbReference type="MIM" id="606988">
    <property type="type" value="gene"/>
</dbReference>
<dbReference type="MIM" id="618438">
    <property type="type" value="phenotype"/>
</dbReference>
<dbReference type="neXtProt" id="NX_Q99653"/>
<dbReference type="OpenTargets" id="ENSG00000187446"/>
<dbReference type="VEuPathDB" id="HostDB:ENSG00000187446"/>
<dbReference type="eggNOG" id="KOG0034">
    <property type="taxonomic scope" value="Eukaryota"/>
</dbReference>
<dbReference type="GeneTree" id="ENSGT00940000154629"/>
<dbReference type="HOGENOM" id="CLU_061288_10_5_1"/>
<dbReference type="InParanoid" id="Q99653"/>
<dbReference type="OMA" id="LKFAFRM"/>
<dbReference type="OrthoDB" id="191686at2759"/>
<dbReference type="PAN-GO" id="Q99653">
    <property type="GO annotations" value="2 GO annotations based on evolutionary models"/>
</dbReference>
<dbReference type="PhylomeDB" id="Q99653"/>
<dbReference type="TreeFam" id="TF354284"/>
<dbReference type="PathwayCommons" id="Q99653"/>
<dbReference type="Reactome" id="R-HSA-2160916">
    <property type="pathway name" value="Hyaluronan uptake and degradation"/>
</dbReference>
<dbReference type="SignaLink" id="Q99653"/>
<dbReference type="BioGRID-ORCS" id="11261">
    <property type="hits" value="67 hits in 1162 CRISPR screens"/>
</dbReference>
<dbReference type="CD-CODE" id="DEE660B4">
    <property type="entry name" value="Stress granule"/>
</dbReference>
<dbReference type="ChiTaRS" id="CHP1">
    <property type="organism name" value="human"/>
</dbReference>
<dbReference type="EvolutionaryTrace" id="Q99653"/>
<dbReference type="GeneWiki" id="CHP_(gene)"/>
<dbReference type="GenomeRNAi" id="11261"/>
<dbReference type="Pharos" id="Q99653">
    <property type="development level" value="Tbio"/>
</dbReference>
<dbReference type="PRO" id="PR:Q99653"/>
<dbReference type="Proteomes" id="UP000005640">
    <property type="component" value="Chromosome 15"/>
</dbReference>
<dbReference type="RNAct" id="Q99653">
    <property type="molecule type" value="protein"/>
</dbReference>
<dbReference type="Bgee" id="ENSG00000187446">
    <property type="expression patterns" value="Expressed in colonic mucosa and 202 other cell types or tissues"/>
</dbReference>
<dbReference type="ExpressionAtlas" id="Q99653">
    <property type="expression patterns" value="baseline and differential"/>
</dbReference>
<dbReference type="GO" id="GO:0005737">
    <property type="term" value="C:cytoplasm"/>
    <property type="evidence" value="ECO:0000250"/>
    <property type="project" value="UniProtKB"/>
</dbReference>
<dbReference type="GO" id="GO:0005783">
    <property type="term" value="C:endoplasmic reticulum"/>
    <property type="evidence" value="ECO:0000250"/>
    <property type="project" value="UniProtKB"/>
</dbReference>
<dbReference type="GO" id="GO:0005793">
    <property type="term" value="C:endoplasmic reticulum-Golgi intermediate compartment"/>
    <property type="evidence" value="ECO:0007669"/>
    <property type="project" value="UniProtKB-SubCell"/>
</dbReference>
<dbReference type="GO" id="GO:0070062">
    <property type="term" value="C:extracellular exosome"/>
    <property type="evidence" value="ECO:0007005"/>
    <property type="project" value="UniProtKB"/>
</dbReference>
<dbReference type="GO" id="GO:0005925">
    <property type="term" value="C:focal adhesion"/>
    <property type="evidence" value="ECO:0007005"/>
    <property type="project" value="UniProtKB"/>
</dbReference>
<dbReference type="GO" id="GO:0000139">
    <property type="term" value="C:Golgi membrane"/>
    <property type="evidence" value="ECO:0000250"/>
    <property type="project" value="UniProtKB"/>
</dbReference>
<dbReference type="GO" id="GO:0045121">
    <property type="term" value="C:membrane raft"/>
    <property type="evidence" value="ECO:0007669"/>
    <property type="project" value="Ensembl"/>
</dbReference>
<dbReference type="GO" id="GO:0015630">
    <property type="term" value="C:microtubule cytoskeleton"/>
    <property type="evidence" value="ECO:0000250"/>
    <property type="project" value="UniProtKB"/>
</dbReference>
<dbReference type="GO" id="GO:0005634">
    <property type="term" value="C:nucleus"/>
    <property type="evidence" value="ECO:0000250"/>
    <property type="project" value="UniProtKB"/>
</dbReference>
<dbReference type="GO" id="GO:0005886">
    <property type="term" value="C:plasma membrane"/>
    <property type="evidence" value="ECO:0000314"/>
    <property type="project" value="UniProtKB"/>
</dbReference>
<dbReference type="GO" id="GO:0030133">
    <property type="term" value="C:transport vesicle"/>
    <property type="evidence" value="ECO:0000250"/>
    <property type="project" value="UniProtKB"/>
</dbReference>
<dbReference type="GO" id="GO:1990351">
    <property type="term" value="C:transporter complex"/>
    <property type="evidence" value="ECO:0007669"/>
    <property type="project" value="Ensembl"/>
</dbReference>
<dbReference type="GO" id="GO:0005509">
    <property type="term" value="F:calcium ion binding"/>
    <property type="evidence" value="ECO:0000314"/>
    <property type="project" value="UniProtKB"/>
</dbReference>
<dbReference type="GO" id="GO:0048306">
    <property type="term" value="F:calcium-dependent protein binding"/>
    <property type="evidence" value="ECO:0000314"/>
    <property type="project" value="UniProtKB"/>
</dbReference>
<dbReference type="GO" id="GO:0019900">
    <property type="term" value="F:kinase binding"/>
    <property type="evidence" value="ECO:0000250"/>
    <property type="project" value="UniProtKB"/>
</dbReference>
<dbReference type="GO" id="GO:0008017">
    <property type="term" value="F:microtubule binding"/>
    <property type="evidence" value="ECO:0000250"/>
    <property type="project" value="UniProtKB"/>
</dbReference>
<dbReference type="GO" id="GO:0015459">
    <property type="term" value="F:potassium channel regulator activity"/>
    <property type="evidence" value="ECO:0000304"/>
    <property type="project" value="ProtInc"/>
</dbReference>
<dbReference type="GO" id="GO:0004860">
    <property type="term" value="F:protein kinase inhibitor activity"/>
    <property type="evidence" value="ECO:0007669"/>
    <property type="project" value="UniProtKB-KW"/>
</dbReference>
<dbReference type="GO" id="GO:0015385">
    <property type="term" value="F:sodium:proton antiporter activity"/>
    <property type="evidence" value="ECO:0007669"/>
    <property type="project" value="Ensembl"/>
</dbReference>
<dbReference type="GO" id="GO:0071468">
    <property type="term" value="P:cellular response to acidic pH"/>
    <property type="evidence" value="ECO:0000250"/>
    <property type="project" value="UniProtKB"/>
</dbReference>
<dbReference type="GO" id="GO:0031122">
    <property type="term" value="P:cytoplasmic microtubule organization"/>
    <property type="evidence" value="ECO:0000250"/>
    <property type="project" value="UniProtKB"/>
</dbReference>
<dbReference type="GO" id="GO:0022406">
    <property type="term" value="P:membrane docking"/>
    <property type="evidence" value="ECO:0000250"/>
    <property type="project" value="UniProtKB"/>
</dbReference>
<dbReference type="GO" id="GO:0061025">
    <property type="term" value="P:membrane fusion"/>
    <property type="evidence" value="ECO:0000250"/>
    <property type="project" value="UniProtKB"/>
</dbReference>
<dbReference type="GO" id="GO:0061024">
    <property type="term" value="P:membrane organization"/>
    <property type="evidence" value="ECO:0000250"/>
    <property type="project" value="UniProtKB"/>
</dbReference>
<dbReference type="GO" id="GO:0001578">
    <property type="term" value="P:microtubule bundle formation"/>
    <property type="evidence" value="ECO:0000250"/>
    <property type="project" value="UniProtKB"/>
</dbReference>
<dbReference type="GO" id="GO:0070885">
    <property type="term" value="P:negative regulation of calcineurin-NFAT signaling cascade"/>
    <property type="evidence" value="ECO:0000314"/>
    <property type="project" value="UniProtKB"/>
</dbReference>
<dbReference type="GO" id="GO:0032088">
    <property type="term" value="P:negative regulation of NF-kappaB transcription factor activity"/>
    <property type="evidence" value="ECO:0000314"/>
    <property type="project" value="UniProtKB"/>
</dbReference>
<dbReference type="GO" id="GO:0010923">
    <property type="term" value="P:negative regulation of phosphatase activity"/>
    <property type="evidence" value="ECO:0000314"/>
    <property type="project" value="UniProtKB"/>
</dbReference>
<dbReference type="GO" id="GO:0031953">
    <property type="term" value="P:negative regulation of protein autophosphorylation"/>
    <property type="evidence" value="ECO:0000250"/>
    <property type="project" value="UniProtKB"/>
</dbReference>
<dbReference type="GO" id="GO:0042308">
    <property type="term" value="P:negative regulation of protein import into nucleus"/>
    <property type="evidence" value="ECO:0000314"/>
    <property type="project" value="UniProtKB"/>
</dbReference>
<dbReference type="GO" id="GO:0006469">
    <property type="term" value="P:negative regulation of protein kinase activity"/>
    <property type="evidence" value="ECO:0000250"/>
    <property type="project" value="UniProtKB"/>
</dbReference>
<dbReference type="GO" id="GO:0001933">
    <property type="term" value="P:negative regulation of protein phosphorylation"/>
    <property type="evidence" value="ECO:0000250"/>
    <property type="project" value="UniProtKB"/>
</dbReference>
<dbReference type="GO" id="GO:0031397">
    <property type="term" value="P:negative regulation of protein ubiquitination"/>
    <property type="evidence" value="ECO:0000250"/>
    <property type="project" value="UniProtKB"/>
</dbReference>
<dbReference type="GO" id="GO:0071073">
    <property type="term" value="P:positive regulation of phospholipid biosynthetic process"/>
    <property type="evidence" value="ECO:0000315"/>
    <property type="project" value="FlyBase"/>
</dbReference>
<dbReference type="GO" id="GO:0060050">
    <property type="term" value="P:positive regulation of protein glycosylation"/>
    <property type="evidence" value="ECO:0000250"/>
    <property type="project" value="UniProtKB"/>
</dbReference>
<dbReference type="GO" id="GO:0090314">
    <property type="term" value="P:positive regulation of protein targeting to membrane"/>
    <property type="evidence" value="ECO:0000250"/>
    <property type="project" value="UniProtKB"/>
</dbReference>
<dbReference type="GO" id="GO:0051222">
    <property type="term" value="P:positive regulation of protein transport"/>
    <property type="evidence" value="ECO:0000250"/>
    <property type="project" value="UniProtKB"/>
</dbReference>
<dbReference type="GO" id="GO:0032417">
    <property type="term" value="P:positive regulation of sodium:proton antiporter activity"/>
    <property type="evidence" value="ECO:0000314"/>
    <property type="project" value="UniProtKB"/>
</dbReference>
<dbReference type="GO" id="GO:0006813">
    <property type="term" value="P:potassium ion transport"/>
    <property type="evidence" value="ECO:0000304"/>
    <property type="project" value="ProtInc"/>
</dbReference>
<dbReference type="GO" id="GO:0006611">
    <property type="term" value="P:protein export from nucleus"/>
    <property type="evidence" value="ECO:0000250"/>
    <property type="project" value="UniProtKB"/>
</dbReference>
<dbReference type="GO" id="GO:0050821">
    <property type="term" value="P:protein stabilization"/>
    <property type="evidence" value="ECO:0000250"/>
    <property type="project" value="UniProtKB"/>
</dbReference>
<dbReference type="GO" id="GO:0051453">
    <property type="term" value="P:regulation of intracellular pH"/>
    <property type="evidence" value="ECO:0000314"/>
    <property type="project" value="UniProtKB"/>
</dbReference>
<dbReference type="GO" id="GO:0007264">
    <property type="term" value="P:small GTPase-mediated signal transduction"/>
    <property type="evidence" value="ECO:0000304"/>
    <property type="project" value="ProtInc"/>
</dbReference>
<dbReference type="CDD" id="cd00051">
    <property type="entry name" value="EFh"/>
    <property type="match status" value="1"/>
</dbReference>
<dbReference type="FunFam" id="1.10.238.10:FF:000093">
    <property type="entry name" value="Calcineurin B homologous protein 1"/>
    <property type="match status" value="1"/>
</dbReference>
<dbReference type="Gene3D" id="1.10.238.10">
    <property type="entry name" value="EF-hand"/>
    <property type="match status" value="1"/>
</dbReference>
<dbReference type="InterPro" id="IPR051875">
    <property type="entry name" value="Calcineurin_B_homologous"/>
</dbReference>
<dbReference type="InterPro" id="IPR011992">
    <property type="entry name" value="EF-hand-dom_pair"/>
</dbReference>
<dbReference type="InterPro" id="IPR002048">
    <property type="entry name" value="EF_hand_dom"/>
</dbReference>
<dbReference type="PANTHER" id="PTHR46002">
    <property type="entry name" value="EG:114D9.1 PROTEIN-RELATED"/>
    <property type="match status" value="1"/>
</dbReference>
<dbReference type="Pfam" id="PF13499">
    <property type="entry name" value="EF-hand_7"/>
    <property type="match status" value="1"/>
</dbReference>
<dbReference type="SMART" id="SM00054">
    <property type="entry name" value="EFh"/>
    <property type="match status" value="2"/>
</dbReference>
<dbReference type="SUPFAM" id="SSF47473">
    <property type="entry name" value="EF-hand"/>
    <property type="match status" value="1"/>
</dbReference>
<dbReference type="PROSITE" id="PS50222">
    <property type="entry name" value="EF_HAND_2"/>
    <property type="match status" value="3"/>
</dbReference>
<proteinExistence type="evidence at protein level"/>
<reference key="1">
    <citation type="journal article" date="1996" name="Proc. Natl. Acad. Sci. U.S.A.">
        <title>A calcineurin homologous protein inhibits GTPase-stimulated Na-H exchange.</title>
        <authorList>
            <person name="Lin X."/>
            <person name="Barber D.L."/>
        </authorList>
    </citation>
    <scope>NUCLEOTIDE SEQUENCE [MRNA]</scope>
    <scope>FUNCTION IN PH REGULATION</scope>
    <scope>CALCIUM-BINDING</scope>
    <scope>INTERACTION WITH SLC9A1</scope>
    <scope>PHOSPHORYLATION</scope>
    <scope>TISSUE SPECIFICITY</scope>
    <source>
        <tissue>B-cell</tissue>
    </source>
</reference>
<reference key="2">
    <citation type="submission" date="2004-06" db="EMBL/GenBank/DDBJ databases">
        <title>Cloning of human full open reading frames in Gateway(TM) system entry vector (pDONR201).</title>
        <authorList>
            <person name="Ebert L."/>
            <person name="Schick M."/>
            <person name="Neubert P."/>
            <person name="Schatten R."/>
            <person name="Henze S."/>
            <person name="Korn B."/>
        </authorList>
    </citation>
    <scope>NUCLEOTIDE SEQUENCE [LARGE SCALE MRNA]</scope>
</reference>
<reference key="3">
    <citation type="journal article" date="2004" name="Nat. Genet.">
        <title>Complete sequencing and characterization of 21,243 full-length human cDNAs.</title>
        <authorList>
            <person name="Ota T."/>
            <person name="Suzuki Y."/>
            <person name="Nishikawa T."/>
            <person name="Otsuki T."/>
            <person name="Sugiyama T."/>
            <person name="Irie R."/>
            <person name="Wakamatsu A."/>
            <person name="Hayashi K."/>
            <person name="Sato H."/>
            <person name="Nagai K."/>
            <person name="Kimura K."/>
            <person name="Makita H."/>
            <person name="Sekine M."/>
            <person name="Obayashi M."/>
            <person name="Nishi T."/>
            <person name="Shibahara T."/>
            <person name="Tanaka T."/>
            <person name="Ishii S."/>
            <person name="Yamamoto J."/>
            <person name="Saito K."/>
            <person name="Kawai Y."/>
            <person name="Isono Y."/>
            <person name="Nakamura Y."/>
            <person name="Nagahari K."/>
            <person name="Murakami K."/>
            <person name="Yasuda T."/>
            <person name="Iwayanagi T."/>
            <person name="Wagatsuma M."/>
            <person name="Shiratori A."/>
            <person name="Sudo H."/>
            <person name="Hosoiri T."/>
            <person name="Kaku Y."/>
            <person name="Kodaira H."/>
            <person name="Kondo H."/>
            <person name="Sugawara M."/>
            <person name="Takahashi M."/>
            <person name="Kanda K."/>
            <person name="Yokoi T."/>
            <person name="Furuya T."/>
            <person name="Kikkawa E."/>
            <person name="Omura Y."/>
            <person name="Abe K."/>
            <person name="Kamihara K."/>
            <person name="Katsuta N."/>
            <person name="Sato K."/>
            <person name="Tanikawa M."/>
            <person name="Yamazaki M."/>
            <person name="Ninomiya K."/>
            <person name="Ishibashi T."/>
            <person name="Yamashita H."/>
            <person name="Murakawa K."/>
            <person name="Fujimori K."/>
            <person name="Tanai H."/>
            <person name="Kimata M."/>
            <person name="Watanabe M."/>
            <person name="Hiraoka S."/>
            <person name="Chiba Y."/>
            <person name="Ishida S."/>
            <person name="Ono Y."/>
            <person name="Takiguchi S."/>
            <person name="Watanabe S."/>
            <person name="Yosida M."/>
            <person name="Hotuta T."/>
            <person name="Kusano J."/>
            <person name="Kanehori K."/>
            <person name="Takahashi-Fujii A."/>
            <person name="Hara H."/>
            <person name="Tanase T.-O."/>
            <person name="Nomura Y."/>
            <person name="Togiya S."/>
            <person name="Komai F."/>
            <person name="Hara R."/>
            <person name="Takeuchi K."/>
            <person name="Arita M."/>
            <person name="Imose N."/>
            <person name="Musashino K."/>
            <person name="Yuuki H."/>
            <person name="Oshima A."/>
            <person name="Sasaki N."/>
            <person name="Aotsuka S."/>
            <person name="Yoshikawa Y."/>
            <person name="Matsunawa H."/>
            <person name="Ichihara T."/>
            <person name="Shiohata N."/>
            <person name="Sano S."/>
            <person name="Moriya S."/>
            <person name="Momiyama H."/>
            <person name="Satoh N."/>
            <person name="Takami S."/>
            <person name="Terashima Y."/>
            <person name="Suzuki O."/>
            <person name="Nakagawa S."/>
            <person name="Senoh A."/>
            <person name="Mizoguchi H."/>
            <person name="Goto Y."/>
            <person name="Shimizu F."/>
            <person name="Wakebe H."/>
            <person name="Hishigaki H."/>
            <person name="Watanabe T."/>
            <person name="Sugiyama A."/>
            <person name="Takemoto M."/>
            <person name="Kawakami B."/>
            <person name="Yamazaki M."/>
            <person name="Watanabe K."/>
            <person name="Kumagai A."/>
            <person name="Itakura S."/>
            <person name="Fukuzumi Y."/>
            <person name="Fujimori Y."/>
            <person name="Komiyama M."/>
            <person name="Tashiro H."/>
            <person name="Tanigami A."/>
            <person name="Fujiwara T."/>
            <person name="Ono T."/>
            <person name="Yamada K."/>
            <person name="Fujii Y."/>
            <person name="Ozaki K."/>
            <person name="Hirao M."/>
            <person name="Ohmori Y."/>
            <person name="Kawabata A."/>
            <person name="Hikiji T."/>
            <person name="Kobatake N."/>
            <person name="Inagaki H."/>
            <person name="Ikema Y."/>
            <person name="Okamoto S."/>
            <person name="Okitani R."/>
            <person name="Kawakami T."/>
            <person name="Noguchi S."/>
            <person name="Itoh T."/>
            <person name="Shigeta K."/>
            <person name="Senba T."/>
            <person name="Matsumura K."/>
            <person name="Nakajima Y."/>
            <person name="Mizuno T."/>
            <person name="Morinaga M."/>
            <person name="Sasaki M."/>
            <person name="Togashi T."/>
            <person name="Oyama M."/>
            <person name="Hata H."/>
            <person name="Watanabe M."/>
            <person name="Komatsu T."/>
            <person name="Mizushima-Sugano J."/>
            <person name="Satoh T."/>
            <person name="Shirai Y."/>
            <person name="Takahashi Y."/>
            <person name="Nakagawa K."/>
            <person name="Okumura K."/>
            <person name="Nagase T."/>
            <person name="Nomura N."/>
            <person name="Kikuchi H."/>
            <person name="Masuho Y."/>
            <person name="Yamashita R."/>
            <person name="Nakai K."/>
            <person name="Yada T."/>
            <person name="Nakamura Y."/>
            <person name="Ohara O."/>
            <person name="Isogai T."/>
            <person name="Sugano S."/>
        </authorList>
    </citation>
    <scope>NUCLEOTIDE SEQUENCE [LARGE SCALE MRNA]</scope>
    <source>
        <tissue>Brain</tissue>
    </source>
</reference>
<reference key="4">
    <citation type="submission" date="2005-07" db="EMBL/GenBank/DDBJ databases">
        <authorList>
            <person name="Mural R.J."/>
            <person name="Istrail S."/>
            <person name="Sutton G.G."/>
            <person name="Florea L."/>
            <person name="Halpern A.L."/>
            <person name="Mobarry C.M."/>
            <person name="Lippert R."/>
            <person name="Walenz B."/>
            <person name="Shatkay H."/>
            <person name="Dew I."/>
            <person name="Miller J.R."/>
            <person name="Flanigan M.J."/>
            <person name="Edwards N.J."/>
            <person name="Bolanos R."/>
            <person name="Fasulo D."/>
            <person name="Halldorsson B.V."/>
            <person name="Hannenhalli S."/>
            <person name="Turner R."/>
            <person name="Yooseph S."/>
            <person name="Lu F."/>
            <person name="Nusskern D.R."/>
            <person name="Shue B.C."/>
            <person name="Zheng X.H."/>
            <person name="Zhong F."/>
            <person name="Delcher A.L."/>
            <person name="Huson D.H."/>
            <person name="Kravitz S.A."/>
            <person name="Mouchard L."/>
            <person name="Reinert K."/>
            <person name="Remington K.A."/>
            <person name="Clark A.G."/>
            <person name="Waterman M.S."/>
            <person name="Eichler E.E."/>
            <person name="Adams M.D."/>
            <person name="Hunkapiller M.W."/>
            <person name="Myers E.W."/>
            <person name="Venter J.C."/>
        </authorList>
    </citation>
    <scope>NUCLEOTIDE SEQUENCE [LARGE SCALE GENOMIC DNA]</scope>
</reference>
<reference key="5">
    <citation type="journal article" date="2004" name="Genome Res.">
        <title>The status, quality, and expansion of the NIH full-length cDNA project: the Mammalian Gene Collection (MGC).</title>
        <authorList>
            <consortium name="The MGC Project Team"/>
        </authorList>
    </citation>
    <scope>NUCLEOTIDE SEQUENCE [LARGE SCALE MRNA]</scope>
    <source>
        <tissue>Uterus</tissue>
    </source>
</reference>
<reference key="6">
    <citation type="journal article" date="1999" name="J. Biol. Chem.">
        <title>Inhibition of calcineurin phosphatase activity by a calcineurin B homologous protein.</title>
        <authorList>
            <person name="Lin X."/>
            <person name="Sikkink R.A."/>
            <person name="Rusnak F."/>
            <person name="Barber D.L."/>
        </authorList>
    </citation>
    <scope>FUNCTION AS A CALCINEURIN INHIBITOR</scope>
    <scope>INTERACTION WITH PPP3CA</scope>
</reference>
<reference key="7">
    <citation type="journal article" date="2001" name="J. Biol. Chem.">
        <title>Calcineurin homologous protein as an essential cofactor for Na+/H+ exchangers.</title>
        <authorList>
            <person name="Pang T."/>
            <person name="Su X."/>
            <person name="Wakabayashi S."/>
            <person name="Shigekawa M."/>
        </authorList>
    </citation>
    <scope>FUNCTION</scope>
    <scope>INTERACTION WITH SLC9A1</scope>
    <scope>SUBCELLULAR LOCATION</scope>
</reference>
<reference key="8">
    <citation type="journal article" date="2004" name="Biochemistry">
        <title>Role of calcineurin B homologous protein in pH regulation by the Na+/H+ exchanger 1: tightly bound Ca2+ ions as important structural elements.</title>
        <authorList>
            <person name="Pang T."/>
            <person name="Hisamitsu T."/>
            <person name="Mori H."/>
            <person name="Shigekawa M."/>
            <person name="Wakabayashi S."/>
        </authorList>
    </citation>
    <scope>FUNCTION</scope>
    <scope>INTERACTION WITH SLC9A1</scope>
    <scope>SUBCELLULAR LOCATION</scope>
    <scope>CALCIUM-BINDING</scope>
    <scope>MUTAGENESIS OF ASP-50; GLU-134 AND GLU-175</scope>
</reference>
<reference key="9">
    <citation type="journal article" date="2010" name="J. Biol. Chem.">
        <title>Nuclear-localized calcineurin homologous protein CHP1 interacts with upstream binding factor and inhibits ribosomal RNA synthesis.</title>
        <authorList>
            <person name="Jimenez-Vidal M."/>
            <person name="Srivastava J."/>
            <person name="Putney L.K."/>
            <person name="Barber D.L."/>
        </authorList>
    </citation>
    <scope>MUTAGENESIS OF VAL-143; VAL-145; ILE-147; VAL-183 AND VAL-185</scope>
</reference>
<reference key="10">
    <citation type="journal article" date="2011" name="BMC Syst. Biol.">
        <title>Initial characterization of the human central proteome.</title>
        <authorList>
            <person name="Burkard T.R."/>
            <person name="Planyavsky M."/>
            <person name="Kaupe I."/>
            <person name="Breitwieser F.P."/>
            <person name="Buerckstuemmer T."/>
            <person name="Bennett K.L."/>
            <person name="Superti-Furga G."/>
            <person name="Colinge J."/>
        </authorList>
    </citation>
    <scope>IDENTIFICATION BY MASS SPECTROMETRY [LARGE SCALE ANALYSIS]</scope>
</reference>
<reference key="11">
    <citation type="journal article" date="2013" name="J. Proteome Res.">
        <title>Toward a comprehensive characterization of a human cancer cell phosphoproteome.</title>
        <authorList>
            <person name="Zhou H."/>
            <person name="Di Palma S."/>
            <person name="Preisinger C."/>
            <person name="Peng M."/>
            <person name="Polat A.N."/>
            <person name="Heck A.J."/>
            <person name="Mohammed S."/>
        </authorList>
    </citation>
    <scope>IDENTIFICATION BY MASS SPECTROMETRY [LARGE SCALE ANALYSIS]</scope>
    <source>
        <tissue>Cervix carcinoma</tissue>
    </source>
</reference>
<reference key="12">
    <citation type="journal article" date="2014" name="J. Proteomics">
        <title>An enzyme assisted RP-RPLC approach for in-depth analysis of human liver phosphoproteome.</title>
        <authorList>
            <person name="Bian Y."/>
            <person name="Song C."/>
            <person name="Cheng K."/>
            <person name="Dong M."/>
            <person name="Wang F."/>
            <person name="Huang J."/>
            <person name="Sun D."/>
            <person name="Wang L."/>
            <person name="Ye M."/>
            <person name="Zou H."/>
        </authorList>
    </citation>
    <scope>IDENTIFICATION BY MASS SPECTROMETRY [LARGE SCALE ANALYSIS]</scope>
    <source>
        <tissue>Liver</tissue>
    </source>
</reference>
<reference key="13">
    <citation type="journal article" date="2014" name="Nat. Commun.">
        <title>Global profiling of co- and post-translationally N-myristoylated proteomes in human cells.</title>
        <authorList>
            <person name="Thinon E."/>
            <person name="Serwa R.A."/>
            <person name="Broncel M."/>
            <person name="Brannigan J.A."/>
            <person name="Brassat U."/>
            <person name="Wright M.H."/>
            <person name="Heal W.P."/>
            <person name="Wilkinson A.J."/>
            <person name="Mann D.J."/>
            <person name="Tate E.W."/>
        </authorList>
    </citation>
    <scope>MYRISTOYLATION AT GLY-2</scope>
    <scope>CLEAVAGE OF INITIATOR METHIONINE</scope>
    <scope>IDENTIFICATION BY MASS SPECTROMETRY</scope>
</reference>
<reference key="14">
    <citation type="journal article" date="2015" name="Proteomics">
        <title>N-terminome analysis of the human mitochondrial proteome.</title>
        <authorList>
            <person name="Vaca Jacome A.S."/>
            <person name="Rabilloud T."/>
            <person name="Schaeffer-Reiss C."/>
            <person name="Rompais M."/>
            <person name="Ayoub D."/>
            <person name="Lane L."/>
            <person name="Bairoch A."/>
            <person name="Van Dorsselaer A."/>
            <person name="Carapito C."/>
        </authorList>
    </citation>
    <scope>IDENTIFICATION BY MASS SPECTROMETRY [LARGE SCALE ANALYSIS]</scope>
</reference>
<reference key="15">
    <citation type="journal article" date="2007" name="J. Biol. Chem.">
        <title>Solution structure of the cytoplasmic region of Na+/H+ exchanger 1 complexed with essential cofactor calcineurin B homologous protein 1.</title>
        <authorList>
            <person name="Mishima M."/>
            <person name="Wakabayashi S."/>
            <person name="Kojima C."/>
        </authorList>
    </citation>
    <scope>STRUCTURE BY NMR OF 1-195 IN COMPLEX WITH CALCIUM IONS AND SLC9A1</scope>
</reference>
<reference key="16">
    <citation type="journal article" date="2018" name="Neurol. Genet.">
        <title>Biallelic CHP1 mutation causes human autosomal recessive ataxia by impairing NHE1 function.</title>
        <authorList>
            <person name="Mendoza-Ferreira N."/>
            <person name="Coutelier M."/>
            <person name="Janzen E."/>
            <person name="Hosseinibarkooie S."/>
            <person name="Loehr H."/>
            <person name="Schneider S."/>
            <person name="Milbradt J."/>
            <person name="Karakaya M."/>
            <person name="Riessland M."/>
            <person name="Pichlo C."/>
            <person name="Torres-Benito L."/>
            <person name="Singleton A."/>
            <person name="Zuchner S."/>
            <person name="Brice A."/>
            <person name="Durr A."/>
            <person name="Hammerschmidt M."/>
            <person name="Stevanin G."/>
            <person name="Wirth B."/>
        </authorList>
    </citation>
    <scope>SUBCELLULAR LOCATION</scope>
    <scope>INVOLVEMENT IN SPAX9</scope>
    <scope>VARIANT SPAX9 LYS-19 DEL</scope>
    <scope>CHARACTERIZATION OF VARIANT SPAX9 LYS-19 DEL</scope>
</reference>
<reference evidence="16 17" key="17">
    <citation type="journal article" date="2021" name="Nat. Commun.">
        <title>Structure and mechanism of the human NHE1-CHP1 complex.</title>
        <authorList>
            <person name="Dong Y."/>
            <person name="Gao Y."/>
            <person name="Ilie A."/>
            <person name="Kim D."/>
            <person name="Boucher A."/>
            <person name="Li B."/>
            <person name="Zhang X.C."/>
            <person name="Orlowski J."/>
            <person name="Zhao Y."/>
        </authorList>
    </citation>
    <scope>STRUCTURE BY ELECTRON MICROSCOPY (3.30 ANGSTROMS) OF 11-195 IN COMPLEX WITH SLC9A1 AND CARIPORIDE</scope>
    <scope>SUBUNIT</scope>
    <scope>MUTAGENESIS OF ARG-192</scope>
</reference>
<reference evidence="18" key="18">
    <citation type="journal article" date="2022" name="Sci. Adv.">
        <title>Structural basis of autoinhibition of the human NHE3-CHP1 complex.</title>
        <authorList>
            <person name="Dong Y."/>
            <person name="Li H."/>
            <person name="Ilie A."/>
            <person name="Gao Y."/>
            <person name="Boucher A."/>
            <person name="Zhang X.C."/>
            <person name="Orlowski J."/>
            <person name="Zhao Y."/>
        </authorList>
    </citation>
    <scope>STRUCTURE BY ELECTRON MICROSCOPY (3.20 ANGSTROMS) OF 11-195 IN COMPLEX WITH SLC9A3</scope>
</reference>